<dbReference type="EMBL" id="DQ663565">
    <property type="protein sequence ID" value="ABG81318.1"/>
    <property type="molecule type" value="mRNA"/>
</dbReference>
<dbReference type="SMR" id="A4KA61"/>
<dbReference type="STRING" id="4577.A4KA61"/>
<dbReference type="Allergome" id="682">
    <property type="allergen name" value="Zea m 12"/>
</dbReference>
<dbReference type="InParanoid" id="A4KA61"/>
<dbReference type="Proteomes" id="UP000007305">
    <property type="component" value="Unplaced"/>
</dbReference>
<dbReference type="ExpressionAtlas" id="A4KA61">
    <property type="expression patterns" value="baseline and differential"/>
</dbReference>
<dbReference type="GO" id="GO:0005938">
    <property type="term" value="C:cell cortex"/>
    <property type="evidence" value="ECO:0000318"/>
    <property type="project" value="GO_Central"/>
</dbReference>
<dbReference type="GO" id="GO:0005856">
    <property type="term" value="C:cytoskeleton"/>
    <property type="evidence" value="ECO:0007669"/>
    <property type="project" value="UniProtKB-SubCell"/>
</dbReference>
<dbReference type="GO" id="GO:0003785">
    <property type="term" value="F:actin monomer binding"/>
    <property type="evidence" value="ECO:0000318"/>
    <property type="project" value="GO_Central"/>
</dbReference>
<dbReference type="GO" id="GO:0070064">
    <property type="term" value="F:proline-rich region binding"/>
    <property type="evidence" value="ECO:0007669"/>
    <property type="project" value="UniProtKB-ARBA"/>
</dbReference>
<dbReference type="GO" id="GO:0007097">
    <property type="term" value="P:nuclear migration"/>
    <property type="evidence" value="ECO:0007669"/>
    <property type="project" value="UniProtKB-ARBA"/>
</dbReference>
<dbReference type="GO" id="GO:0032956">
    <property type="term" value="P:regulation of actin cytoskeleton organization"/>
    <property type="evidence" value="ECO:0007669"/>
    <property type="project" value="UniProtKB-ARBA"/>
</dbReference>
<dbReference type="CDD" id="cd00148">
    <property type="entry name" value="PROF"/>
    <property type="match status" value="1"/>
</dbReference>
<dbReference type="FunFam" id="3.30.450.30:FF:000001">
    <property type="entry name" value="Profilin"/>
    <property type="match status" value="1"/>
</dbReference>
<dbReference type="Gene3D" id="3.30.450.30">
    <property type="entry name" value="Dynein light chain 2a, cytoplasmic"/>
    <property type="match status" value="1"/>
</dbReference>
<dbReference type="InterPro" id="IPR048278">
    <property type="entry name" value="PFN"/>
</dbReference>
<dbReference type="InterPro" id="IPR005455">
    <property type="entry name" value="PFN_euk"/>
</dbReference>
<dbReference type="InterPro" id="IPR036140">
    <property type="entry name" value="PFN_sf"/>
</dbReference>
<dbReference type="InterPro" id="IPR027310">
    <property type="entry name" value="Profilin_CS"/>
</dbReference>
<dbReference type="PANTHER" id="PTHR11604">
    <property type="entry name" value="PROFILIN"/>
    <property type="match status" value="1"/>
</dbReference>
<dbReference type="PANTHER" id="PTHR11604:SF51">
    <property type="entry name" value="PROFILIN-A"/>
    <property type="match status" value="1"/>
</dbReference>
<dbReference type="Pfam" id="PF00235">
    <property type="entry name" value="Profilin"/>
    <property type="match status" value="1"/>
</dbReference>
<dbReference type="PRINTS" id="PR00392">
    <property type="entry name" value="PROFILIN"/>
</dbReference>
<dbReference type="PRINTS" id="PR01640">
    <property type="entry name" value="PROFILINPLNT"/>
</dbReference>
<dbReference type="SMART" id="SM00392">
    <property type="entry name" value="PROF"/>
    <property type="match status" value="1"/>
</dbReference>
<dbReference type="SUPFAM" id="SSF55770">
    <property type="entry name" value="Profilin (actin-binding protein)"/>
    <property type="match status" value="1"/>
</dbReference>
<dbReference type="PROSITE" id="PS00414">
    <property type="entry name" value="PROFILIN"/>
    <property type="match status" value="1"/>
</dbReference>
<proteinExistence type="evidence at protein level"/>
<accession>A4KA61</accession>
<organism>
    <name type="scientific">Zea mays</name>
    <name type="common">Maize</name>
    <dbReference type="NCBI Taxonomy" id="4577"/>
    <lineage>
        <taxon>Eukaryota</taxon>
        <taxon>Viridiplantae</taxon>
        <taxon>Streptophyta</taxon>
        <taxon>Embryophyta</taxon>
        <taxon>Tracheophyta</taxon>
        <taxon>Spermatophyta</taxon>
        <taxon>Magnoliopsida</taxon>
        <taxon>Liliopsida</taxon>
        <taxon>Poales</taxon>
        <taxon>Poaceae</taxon>
        <taxon>PACMAD clade</taxon>
        <taxon>Panicoideae</taxon>
        <taxon>Andropogonodae</taxon>
        <taxon>Andropogoneae</taxon>
        <taxon>Tripsacinae</taxon>
        <taxon>Zea</taxon>
    </lineage>
</organism>
<reference key="1">
    <citation type="journal article" date="2012" name="PLoS ONE">
        <title>Characterization of profilin polymorphism in pollen with a focus on multifunctionality.</title>
        <authorList>
            <person name="Jimenez-Lopez J.C."/>
            <person name="Morales S."/>
            <person name="Castro A.J."/>
            <person name="Volkmann D."/>
            <person name="Rodriguez-Garcia M.I."/>
            <person name="Alche Jde D."/>
        </authorList>
    </citation>
    <scope>NUCLEOTIDE SEQUENCE [MRNA]</scope>
    <scope>POLYMORPHISM</scope>
    <source>
        <strain>cv. Birko</strain>
    </source>
</reference>
<reference key="2">
    <citation type="journal article" date="2013" name="PLoS ONE">
        <title>Analysis of the effects of polymorphism on pollen profilin structural functionality and the generation of conformational, T- and B-cell epitopes.</title>
        <authorList>
            <person name="Jimenez-Lopez J.C."/>
            <person name="Rodriguez-Garcia M.I."/>
            <person name="Alche J.D."/>
        </authorList>
    </citation>
    <scope>3D-STRUCTURE MODELING</scope>
    <scope>DISULFIDE BOND</scope>
</reference>
<feature type="initiator methionine" description="Removed" evidence="1">
    <location>
        <position position="1"/>
    </location>
</feature>
<feature type="chain" id="PRO_0000425071" description="Profilin-12">
    <location>
        <begin position="2"/>
        <end position="130"/>
    </location>
</feature>
<feature type="short sequence motif" description="Involved in PIP2 interaction">
    <location>
        <begin position="81"/>
        <end position="97"/>
    </location>
</feature>
<feature type="modified residue" description="Phosphothreonine" evidence="1">
    <location>
        <position position="111"/>
    </location>
</feature>
<feature type="disulfide bond" evidence="3">
    <location>
        <begin position="13"/>
        <end position="115"/>
    </location>
</feature>
<keyword id="KW-0009">Actin-binding</keyword>
<keyword id="KW-0020">Allergen</keyword>
<keyword id="KW-0963">Cytoplasm</keyword>
<keyword id="KW-0206">Cytoskeleton</keyword>
<keyword id="KW-1015">Disulfide bond</keyword>
<keyword id="KW-0597">Phosphoprotein</keyword>
<keyword id="KW-1185">Reference proteome</keyword>
<evidence type="ECO:0000250" key="1"/>
<evidence type="ECO:0000305" key="2"/>
<evidence type="ECO:0000305" key="3">
    <source>
    </source>
</evidence>
<sequence>MSWQAYVDEHLMCEIEGHHLTSAAIVGHDGAVWAQSTAFPQFKTEEMTNIMKDFDEPGFLAPTGLFLGPTKYMVIQGEPGAVIRGKKGSGGITVKKTGQAMVVGIYDEPMTPGQCNMVVERLGDYLLNRA</sequence>
<comment type="function">
    <text evidence="1">Binds to actin and affects the structure of the cytoskeleton. At high concentrations, profilin prevents the polymerization of actin, whereas it enhances it at low concentrations (By similarity).</text>
</comment>
<comment type="subunit">
    <text evidence="1">Occurs in many kinds of cells as a complex with monomeric actin in a 1:1 ratio.</text>
</comment>
<comment type="subcellular location">
    <subcellularLocation>
        <location evidence="1">Cytoplasm</location>
        <location evidence="1">Cytoskeleton</location>
    </subcellularLocation>
</comment>
<comment type="PTM">
    <text evidence="1">Phosphorylated by MAP kinases.</text>
</comment>
<comment type="polymorphism">
    <text>Several isoforms of the allergen exist due to polymorphism.</text>
</comment>
<comment type="allergen">
    <text>Causes an allergic reaction in human.</text>
</comment>
<comment type="miscellaneous">
    <text evidence="3">The variability of the residues taking part of IgE-binding epitopes might be responsible of the difference in cross-reactivity among olive pollen cultivars, and between distantly related pollen species, leading to a variable range of allergy reactions among atopic patients.</text>
</comment>
<comment type="similarity">
    <text evidence="2">Belongs to the profilin family.</text>
</comment>
<protein>
    <recommendedName>
        <fullName>Profilin-12</fullName>
    </recommendedName>
    <alternativeName>
        <fullName>Pollen allergen Zea m 12</fullName>
    </alternativeName>
    <alternativeName>
        <fullName>Pollen profilin variant 7</fullName>
    </alternativeName>
    <allergenName>Zea m 12</allergenName>
</protein>
<name>PRO12_MAIZE</name>